<keyword id="KW-0007">Acetylation</keyword>
<keyword id="KW-0025">Alternative splicing</keyword>
<keyword id="KW-0067">ATP-binding</keyword>
<keyword id="KW-0106">Calcium</keyword>
<keyword id="KW-0143">Chaperone</keyword>
<keyword id="KW-1015">Disulfide bond</keyword>
<keyword id="KW-0256">Endoplasmic reticulum</keyword>
<keyword id="KW-0325">Glycoprotein</keyword>
<keyword id="KW-0378">Hydrolase</keyword>
<keyword id="KW-0379">Hydroxylation</keyword>
<keyword id="KW-0547">Nucleotide-binding</keyword>
<keyword id="KW-0597">Phosphoprotein</keyword>
<keyword id="KW-1185">Reference proteome</keyword>
<keyword id="KW-0703">Sarcoplasmic reticulum</keyword>
<keyword id="KW-0732">Signal</keyword>
<dbReference type="EC" id="3.6.4.-" evidence="3"/>
<dbReference type="EMBL" id="CH473960">
    <property type="protein sequence ID" value="EDM17052.1"/>
    <property type="molecule type" value="Genomic_DNA"/>
</dbReference>
<dbReference type="EMBL" id="BC081917">
    <property type="protein sequence ID" value="AAH81917.1"/>
    <property type="molecule type" value="mRNA"/>
</dbReference>
<dbReference type="RefSeq" id="NP_001012197.2">
    <molecule id="Q66HD0-1"/>
    <property type="nucleotide sequence ID" value="NM_001012197.2"/>
</dbReference>
<dbReference type="SMR" id="Q66HD0"/>
<dbReference type="BioGRID" id="263786">
    <property type="interactions" value="11"/>
</dbReference>
<dbReference type="FunCoup" id="Q66HD0">
    <property type="interactions" value="2641"/>
</dbReference>
<dbReference type="IntAct" id="Q66HD0">
    <property type="interactions" value="12"/>
</dbReference>
<dbReference type="MINT" id="Q66HD0"/>
<dbReference type="STRING" id="10116.ENSRNOP00000034846"/>
<dbReference type="GlyCosmos" id="Q66HD0">
    <property type="glycosylation" value="6 sites, 2 glycans"/>
</dbReference>
<dbReference type="GlyGen" id="Q66HD0">
    <property type="glycosylation" value="7 sites, 3 N-linked glycans (2 sites), 1 O-linked glycan (1 site)"/>
</dbReference>
<dbReference type="iPTMnet" id="Q66HD0"/>
<dbReference type="PhosphoSitePlus" id="Q66HD0"/>
<dbReference type="jPOST" id="Q66HD0"/>
<dbReference type="PaxDb" id="10116-ENSRNOP00000034846"/>
<dbReference type="Ensembl" id="ENSRNOT00000079731.2">
    <molecule id="Q66HD0-2"/>
    <property type="protein sequence ID" value="ENSRNOP00000073056.2"/>
    <property type="gene ID" value="ENSRNOG00000026963.7"/>
</dbReference>
<dbReference type="GeneID" id="362862"/>
<dbReference type="KEGG" id="rno:362862"/>
<dbReference type="UCSC" id="RGD:1310482">
    <molecule id="Q66HD0-1"/>
    <property type="organism name" value="rat"/>
</dbReference>
<dbReference type="AGR" id="RGD:1310482"/>
<dbReference type="CTD" id="7184"/>
<dbReference type="RGD" id="1310482">
    <property type="gene designation" value="Hsp90b1"/>
</dbReference>
<dbReference type="eggNOG" id="KOG0020">
    <property type="taxonomic scope" value="Eukaryota"/>
</dbReference>
<dbReference type="GeneTree" id="ENSGT01020000230401"/>
<dbReference type="InParanoid" id="Q66HD0"/>
<dbReference type="OMA" id="YMLQETS"/>
<dbReference type="OrthoDB" id="65032at9989"/>
<dbReference type="PhylomeDB" id="Q66HD0"/>
<dbReference type="TreeFam" id="TF105969"/>
<dbReference type="Reactome" id="R-RNO-1679131">
    <property type="pathway name" value="Trafficking and processing of endosomal TLR"/>
</dbReference>
<dbReference type="Reactome" id="R-RNO-3000480">
    <property type="pathway name" value="Scavenging by Class A Receptors"/>
</dbReference>
<dbReference type="Reactome" id="R-RNO-381426">
    <property type="pathway name" value="Regulation of Insulin-like Growth Factor (IGF) transport and uptake by Insulin-like Growth Factor Binding Proteins (IGFBPs)"/>
</dbReference>
<dbReference type="Reactome" id="R-RNO-6785807">
    <property type="pathway name" value="Interleukin-4 and Interleukin-13 signaling"/>
</dbReference>
<dbReference type="Reactome" id="R-RNO-8957275">
    <property type="pathway name" value="Post-translational protein phosphorylation"/>
</dbReference>
<dbReference type="PRO" id="PR:Q66HD0"/>
<dbReference type="Proteomes" id="UP000002494">
    <property type="component" value="Chromosome 7"/>
</dbReference>
<dbReference type="Proteomes" id="UP000234681">
    <property type="component" value="Chromosome 7"/>
</dbReference>
<dbReference type="GO" id="GO:0005829">
    <property type="term" value="C:cytosol"/>
    <property type="evidence" value="ECO:0000266"/>
    <property type="project" value="RGD"/>
</dbReference>
<dbReference type="GO" id="GO:0005783">
    <property type="term" value="C:endoplasmic reticulum"/>
    <property type="evidence" value="ECO:0000266"/>
    <property type="project" value="RGD"/>
</dbReference>
<dbReference type="GO" id="GO:0034663">
    <property type="term" value="C:endoplasmic reticulum chaperone complex"/>
    <property type="evidence" value="ECO:0000266"/>
    <property type="project" value="RGD"/>
</dbReference>
<dbReference type="GO" id="GO:0005788">
    <property type="term" value="C:endoplasmic reticulum lumen"/>
    <property type="evidence" value="ECO:0000266"/>
    <property type="project" value="RGD"/>
</dbReference>
<dbReference type="GO" id="GO:0005789">
    <property type="term" value="C:endoplasmic reticulum membrane"/>
    <property type="evidence" value="ECO:0000266"/>
    <property type="project" value="RGD"/>
</dbReference>
<dbReference type="GO" id="GO:0042470">
    <property type="term" value="C:melanosome"/>
    <property type="evidence" value="ECO:0007669"/>
    <property type="project" value="UniProtKB-SubCell"/>
</dbReference>
<dbReference type="GO" id="GO:0030496">
    <property type="term" value="C:midbody"/>
    <property type="evidence" value="ECO:0000266"/>
    <property type="project" value="RGD"/>
</dbReference>
<dbReference type="GO" id="GO:0048471">
    <property type="term" value="C:perinuclear region of cytoplasm"/>
    <property type="evidence" value="ECO:0000266"/>
    <property type="project" value="RGD"/>
</dbReference>
<dbReference type="GO" id="GO:0032991">
    <property type="term" value="C:protein-containing complex"/>
    <property type="evidence" value="ECO:0000266"/>
    <property type="project" value="RGD"/>
</dbReference>
<dbReference type="GO" id="GO:0033018">
    <property type="term" value="C:sarcoplasmic reticulum lumen"/>
    <property type="evidence" value="ECO:0007669"/>
    <property type="project" value="UniProtKB-SubCell"/>
</dbReference>
<dbReference type="GO" id="GO:0005790">
    <property type="term" value="C:smooth endoplasmic reticulum"/>
    <property type="evidence" value="ECO:0000314"/>
    <property type="project" value="UniProtKB"/>
</dbReference>
<dbReference type="GO" id="GO:0097524">
    <property type="term" value="C:sperm plasma membrane"/>
    <property type="evidence" value="ECO:0000266"/>
    <property type="project" value="RGD"/>
</dbReference>
<dbReference type="GO" id="GO:0005524">
    <property type="term" value="F:ATP binding"/>
    <property type="evidence" value="ECO:0000318"/>
    <property type="project" value="GO_Central"/>
</dbReference>
<dbReference type="GO" id="GO:0016887">
    <property type="term" value="F:ATP hydrolysis activity"/>
    <property type="evidence" value="ECO:0000318"/>
    <property type="project" value="GO_Central"/>
</dbReference>
<dbReference type="GO" id="GO:0140662">
    <property type="term" value="F:ATP-dependent protein folding chaperone"/>
    <property type="evidence" value="ECO:0000266"/>
    <property type="project" value="RGD"/>
</dbReference>
<dbReference type="GO" id="GO:0050750">
    <property type="term" value="F:low-density lipoprotein particle receptor binding"/>
    <property type="evidence" value="ECO:0000266"/>
    <property type="project" value="RGD"/>
</dbReference>
<dbReference type="GO" id="GO:0044183">
    <property type="term" value="F:protein folding chaperone"/>
    <property type="evidence" value="ECO:0000266"/>
    <property type="project" value="RGD"/>
</dbReference>
<dbReference type="GO" id="GO:0019903">
    <property type="term" value="F:protein phosphatase binding"/>
    <property type="evidence" value="ECO:0000266"/>
    <property type="project" value="RGD"/>
</dbReference>
<dbReference type="GO" id="GO:0004864">
    <property type="term" value="F:protein phosphatase inhibitor activity"/>
    <property type="evidence" value="ECO:0000266"/>
    <property type="project" value="RGD"/>
</dbReference>
<dbReference type="GO" id="GO:0003723">
    <property type="term" value="F:RNA binding"/>
    <property type="evidence" value="ECO:0000266"/>
    <property type="project" value="RGD"/>
</dbReference>
<dbReference type="GO" id="GO:0051082">
    <property type="term" value="F:unfolded protein binding"/>
    <property type="evidence" value="ECO:0000318"/>
    <property type="project" value="GO_Central"/>
</dbReference>
<dbReference type="GO" id="GO:0031247">
    <property type="term" value="P:actin rod assembly"/>
    <property type="evidence" value="ECO:0000266"/>
    <property type="project" value="RGD"/>
</dbReference>
<dbReference type="GO" id="GO:0071318">
    <property type="term" value="P:cellular response to ATP"/>
    <property type="evidence" value="ECO:0000266"/>
    <property type="project" value="RGD"/>
</dbReference>
<dbReference type="GO" id="GO:0071287">
    <property type="term" value="P:cellular response to manganese ion"/>
    <property type="evidence" value="ECO:0000270"/>
    <property type="project" value="ParkinsonsUK-UCL"/>
</dbReference>
<dbReference type="GO" id="GO:0036503">
    <property type="term" value="P:ERAD pathway"/>
    <property type="evidence" value="ECO:0000250"/>
    <property type="project" value="UniProtKB"/>
</dbReference>
<dbReference type="GO" id="GO:0043066">
    <property type="term" value="P:negative regulation of apoptotic process"/>
    <property type="evidence" value="ECO:0000266"/>
    <property type="project" value="RGD"/>
</dbReference>
<dbReference type="GO" id="GO:0034123">
    <property type="term" value="P:positive regulation of toll-like receptor signaling pathway"/>
    <property type="evidence" value="ECO:0000266"/>
    <property type="project" value="RGD"/>
</dbReference>
<dbReference type="GO" id="GO:0030177">
    <property type="term" value="P:positive regulation of Wnt signaling pathway"/>
    <property type="evidence" value="ECO:0000266"/>
    <property type="project" value="RGD"/>
</dbReference>
<dbReference type="GO" id="GO:0006457">
    <property type="term" value="P:protein folding"/>
    <property type="evidence" value="ECO:0000266"/>
    <property type="project" value="RGD"/>
</dbReference>
<dbReference type="GO" id="GO:0072659">
    <property type="term" value="P:protein localization to plasma membrane"/>
    <property type="evidence" value="ECO:0000266"/>
    <property type="project" value="RGD"/>
</dbReference>
<dbReference type="GO" id="GO:0001666">
    <property type="term" value="P:response to hypoxia"/>
    <property type="evidence" value="ECO:0000266"/>
    <property type="project" value="RGD"/>
</dbReference>
<dbReference type="GO" id="GO:0030970">
    <property type="term" value="P:retrograde protein transport, ER to cytosol"/>
    <property type="evidence" value="ECO:0000266"/>
    <property type="project" value="RGD"/>
</dbReference>
<dbReference type="CDD" id="cd16927">
    <property type="entry name" value="HATPase_Hsp90-like"/>
    <property type="match status" value="1"/>
</dbReference>
<dbReference type="FunFam" id="3.30.230.80:FF:000003">
    <property type="entry name" value="endoplasmin isoform X1"/>
    <property type="match status" value="1"/>
</dbReference>
<dbReference type="FunFam" id="1.20.120.790:FF:000003">
    <property type="entry name" value="Heat shock protein 90"/>
    <property type="match status" value="1"/>
</dbReference>
<dbReference type="FunFam" id="3.30.565.10:FF:000005">
    <property type="entry name" value="Heat shock protein 90"/>
    <property type="match status" value="1"/>
</dbReference>
<dbReference type="FunFam" id="3.40.50.11260:FF:000003">
    <property type="entry name" value="Heat shock protein 90"/>
    <property type="match status" value="1"/>
</dbReference>
<dbReference type="Gene3D" id="3.30.230.80">
    <property type="match status" value="1"/>
</dbReference>
<dbReference type="Gene3D" id="3.40.50.11260">
    <property type="match status" value="1"/>
</dbReference>
<dbReference type="Gene3D" id="1.20.120.790">
    <property type="entry name" value="Heat shock protein 90, C-terminal domain"/>
    <property type="match status" value="1"/>
</dbReference>
<dbReference type="Gene3D" id="3.30.565.10">
    <property type="entry name" value="Histidine kinase-like ATPase, C-terminal domain"/>
    <property type="match status" value="1"/>
</dbReference>
<dbReference type="HAMAP" id="MF_00505">
    <property type="entry name" value="HSP90"/>
    <property type="match status" value="1"/>
</dbReference>
<dbReference type="InterPro" id="IPR036890">
    <property type="entry name" value="HATPase_C_sf"/>
</dbReference>
<dbReference type="InterPro" id="IPR019805">
    <property type="entry name" value="Heat_shock_protein_90_CS"/>
</dbReference>
<dbReference type="InterPro" id="IPR037196">
    <property type="entry name" value="HSP90_C"/>
</dbReference>
<dbReference type="InterPro" id="IPR001404">
    <property type="entry name" value="Hsp90_fam"/>
</dbReference>
<dbReference type="InterPro" id="IPR020575">
    <property type="entry name" value="Hsp90_N"/>
</dbReference>
<dbReference type="InterPro" id="IPR020568">
    <property type="entry name" value="Ribosomal_Su5_D2-typ_SF"/>
</dbReference>
<dbReference type="NCBIfam" id="NF003555">
    <property type="entry name" value="PRK05218.1"/>
    <property type="match status" value="1"/>
</dbReference>
<dbReference type="PANTHER" id="PTHR11528">
    <property type="entry name" value="HEAT SHOCK PROTEIN 90 FAMILY MEMBER"/>
    <property type="match status" value="1"/>
</dbReference>
<dbReference type="Pfam" id="PF13589">
    <property type="entry name" value="HATPase_c_3"/>
    <property type="match status" value="1"/>
</dbReference>
<dbReference type="Pfam" id="PF00183">
    <property type="entry name" value="HSP90"/>
    <property type="match status" value="1"/>
</dbReference>
<dbReference type="PIRSF" id="PIRSF002583">
    <property type="entry name" value="Hsp90"/>
    <property type="match status" value="1"/>
</dbReference>
<dbReference type="PRINTS" id="PR00775">
    <property type="entry name" value="HEATSHOCK90"/>
</dbReference>
<dbReference type="SMART" id="SM00387">
    <property type="entry name" value="HATPase_c"/>
    <property type="match status" value="1"/>
</dbReference>
<dbReference type="SUPFAM" id="SSF55874">
    <property type="entry name" value="ATPase domain of HSP90 chaperone/DNA topoisomerase II/histidine kinase"/>
    <property type="match status" value="1"/>
</dbReference>
<dbReference type="SUPFAM" id="SSF110942">
    <property type="entry name" value="HSP90 C-terminal domain"/>
    <property type="match status" value="1"/>
</dbReference>
<dbReference type="SUPFAM" id="SSF54211">
    <property type="entry name" value="Ribosomal protein S5 domain 2-like"/>
    <property type="match status" value="1"/>
</dbReference>
<dbReference type="PROSITE" id="PS00014">
    <property type="entry name" value="ER_TARGET"/>
    <property type="match status" value="1"/>
</dbReference>
<dbReference type="PROSITE" id="PS00298">
    <property type="entry name" value="HSP90"/>
    <property type="match status" value="1"/>
</dbReference>
<proteinExistence type="evidence at protein level"/>
<reference evidence="9" key="1">
    <citation type="submission" date="2005-09" db="EMBL/GenBank/DDBJ databases">
        <authorList>
            <person name="Mural R.J."/>
            <person name="Adams M.D."/>
            <person name="Myers E.W."/>
            <person name="Smith H.O."/>
            <person name="Venter J.C."/>
        </authorList>
    </citation>
    <scope>NUCLEOTIDE SEQUENCE [LARGE SCALE GENOMIC DNA]</scope>
</reference>
<reference evidence="10" key="2">
    <citation type="journal article" date="2004" name="Genome Res.">
        <title>The status, quality, and expansion of the NIH full-length cDNA project: the Mammalian Gene Collection (MGC).</title>
        <authorList>
            <consortium name="The MGC Project Team"/>
        </authorList>
    </citation>
    <scope>NUCLEOTIDE SEQUENCE [LARGE SCALE MRNA] (ISOFORM 2)</scope>
    <source>
        <strain evidence="6">Brown Norway</strain>
        <tissue evidence="10">Testis</tissue>
    </source>
</reference>
<reference key="3">
    <citation type="journal article" date="2009" name="Proteomics">
        <title>Proteome profile of the mature rat olfactory bulb.</title>
        <authorList>
            <person name="Maurya D.K."/>
            <person name="Sundaram C.S."/>
            <person name="Bhargava P."/>
        </authorList>
    </citation>
    <scope>IDENTIFICATION BY MASS SPECTROMETRY (ISOFORM 1)</scope>
    <scope>SUBCELLULAR LOCATION</scope>
</reference>
<reference key="4">
    <citation type="journal article" date="2012" name="Nat. Commun.">
        <title>Quantitative maps of protein phosphorylation sites across 14 different rat organs and tissues.</title>
        <authorList>
            <person name="Lundby A."/>
            <person name="Secher A."/>
            <person name="Lage K."/>
            <person name="Nordsborg N.B."/>
            <person name="Dmytriyev A."/>
            <person name="Lundby C."/>
            <person name="Olsen J.V."/>
        </authorList>
    </citation>
    <scope>PHOSPHORYLATION [LARGE SCALE ANALYSIS] AT SER-172; SER-403 AND SER-447</scope>
    <scope>IDENTIFICATION BY MASS SPECTROMETRY [LARGE SCALE ANALYSIS]</scope>
</reference>
<name>ENPL_RAT</name>
<protein>
    <recommendedName>
        <fullName evidence="1">Endoplasmin</fullName>
        <ecNumber evidence="3">3.6.4.-</ecNumber>
    </recommendedName>
    <alternativeName>
        <fullName evidence="1">94 kDa glucose-regulated protein</fullName>
        <shortName>GRP-94</shortName>
    </alternativeName>
    <alternativeName>
        <fullName evidence="1">Heat shock protein 90 kDa beta member 1</fullName>
    </alternativeName>
</protein>
<feature type="signal peptide" evidence="4">
    <location>
        <begin position="1"/>
        <end position="21"/>
    </location>
</feature>
<feature type="chain" id="PRO_0000349122" description="Endoplasmin" evidence="4">
    <location>
        <begin position="22"/>
        <end position="804"/>
    </location>
</feature>
<feature type="region of interest" description="Disordered" evidence="5">
    <location>
        <begin position="288"/>
        <end position="323"/>
    </location>
</feature>
<feature type="region of interest" description="Disordered" evidence="5">
    <location>
        <begin position="749"/>
        <end position="804"/>
    </location>
</feature>
<feature type="short sequence motif" description="SRT pseudosubstrate motif" evidence="2">
    <location>
        <begin position="42"/>
        <end position="44"/>
    </location>
</feature>
<feature type="short sequence motif" description="Prevents secretion from ER" evidence="4">
    <location>
        <begin position="801"/>
        <end position="804"/>
    </location>
</feature>
<feature type="compositionally biased region" description="Acidic residues" evidence="5">
    <location>
        <begin position="289"/>
        <end position="317"/>
    </location>
</feature>
<feature type="compositionally biased region" description="Acidic residues" evidence="5">
    <location>
        <begin position="753"/>
        <end position="794"/>
    </location>
</feature>
<feature type="compositionally biased region" description="Basic and acidic residues" evidence="5">
    <location>
        <begin position="795"/>
        <end position="804"/>
    </location>
</feature>
<feature type="binding site" evidence="3">
    <location>
        <position position="107"/>
    </location>
    <ligand>
        <name>ATP</name>
        <dbReference type="ChEBI" id="CHEBI:30616"/>
    </ligand>
</feature>
<feature type="binding site" evidence="3">
    <location>
        <position position="149"/>
    </location>
    <ligand>
        <name>ATP</name>
        <dbReference type="ChEBI" id="CHEBI:30616"/>
    </ligand>
</feature>
<feature type="binding site" evidence="3">
    <location>
        <position position="162"/>
    </location>
    <ligand>
        <name>ATP</name>
        <dbReference type="ChEBI" id="CHEBI:30616"/>
    </ligand>
</feature>
<feature type="binding site" evidence="3">
    <location>
        <position position="199"/>
    </location>
    <ligand>
        <name>ATP</name>
        <dbReference type="ChEBI" id="CHEBI:30616"/>
    </ligand>
</feature>
<feature type="site" description="Important for ATP hydrolysis" evidence="3">
    <location>
        <position position="448"/>
    </location>
</feature>
<feature type="modified residue" description="Phosphoserine" evidence="2">
    <location>
        <position position="64"/>
    </location>
</feature>
<feature type="modified residue" description="N6-(2-hydroxyisobutyryl)lysine" evidence="2">
    <location>
        <position position="168"/>
    </location>
</feature>
<feature type="modified residue" description="Phosphoserine" evidence="11">
    <location>
        <position position="172"/>
    </location>
</feature>
<feature type="modified residue" description="Phosphoserine" evidence="11">
    <location>
        <position position="403"/>
    </location>
</feature>
<feature type="modified residue" description="N6-succinyllysine" evidence="1">
    <location>
        <position position="404"/>
    </location>
</feature>
<feature type="modified residue" description="Phosphoserine" evidence="11">
    <location>
        <position position="447"/>
    </location>
</feature>
<feature type="modified residue" description="N6-acetyllysine" evidence="1">
    <location>
        <position position="479"/>
    </location>
</feature>
<feature type="modified residue" description="N6-succinyllysine" evidence="1">
    <location>
        <position position="633"/>
    </location>
</feature>
<feature type="glycosylation site" description="N-linked (GlcNAc...) asparagine" evidence="4">
    <location>
        <position position="62"/>
    </location>
</feature>
<feature type="glycosylation site" description="N-linked (GlcNAc...) asparagine" evidence="4">
    <location>
        <position position="107"/>
    </location>
</feature>
<feature type="glycosylation site" description="N-linked (GlcNAc...) asparagine" evidence="4">
    <location>
        <position position="217"/>
    </location>
</feature>
<feature type="glycosylation site" description="N-linked (GlcNAc...) asparagine" evidence="4">
    <location>
        <position position="445"/>
    </location>
</feature>
<feature type="glycosylation site" description="N-linked (GlcNAc...) asparagine" evidence="4">
    <location>
        <position position="481"/>
    </location>
</feature>
<feature type="glycosylation site" description="N-linked (GlcNAc...) asparagine" evidence="4">
    <location>
        <position position="502"/>
    </location>
</feature>
<feature type="disulfide bond" description="Interchain" evidence="1">
    <location>
        <position position="138"/>
    </location>
</feature>
<feature type="splice variant" id="VSP_035206" description="In isoform 2." evidence="8">
    <original>IEKAVVSQRLTESPCALVASQYGWSGNMERIMKAQAYQTGKDISTNYYASQKKTFEINPRHPLIRDMLRRVKEDEDDKTVMDLAVVLFETATLRSGYLLPDTKAYGDRIERMLRLSLNIDPEAQVEEEPEEEPEDTTEDTTDDSEQDEEETDAGAEEEEEEQETEKEPTEKDEL</original>
    <variation>VFGPQTVVSPHRN</variation>
    <location>
        <begin position="631"/>
        <end position="804"/>
    </location>
</feature>
<organism>
    <name type="scientific">Rattus norvegicus</name>
    <name type="common">Rat</name>
    <dbReference type="NCBI Taxonomy" id="10116"/>
    <lineage>
        <taxon>Eukaryota</taxon>
        <taxon>Metazoa</taxon>
        <taxon>Chordata</taxon>
        <taxon>Craniata</taxon>
        <taxon>Vertebrata</taxon>
        <taxon>Euteleostomi</taxon>
        <taxon>Mammalia</taxon>
        <taxon>Eutheria</taxon>
        <taxon>Euarchontoglires</taxon>
        <taxon>Glires</taxon>
        <taxon>Rodentia</taxon>
        <taxon>Myomorpha</taxon>
        <taxon>Muroidea</taxon>
        <taxon>Muridae</taxon>
        <taxon>Murinae</taxon>
        <taxon>Rattus</taxon>
    </lineage>
</organism>
<comment type="function">
    <text evidence="1 2">ATP-dependent chaperone involved in the processing of proteins in the endoplasmic reticulum, regulating their transport. Together with MESD, acts as a modulator of the Wnt pathway by promoting the folding of LRP6, a coreceptor of the canonical Wnt pathway (By similarity). When associated with CNPY3, required for proper folding of Toll-like receptors (By similarity). Promotes folding and trafficking of TLR4 to the cell surface. May participate in the unfolding of cytosolic leaderless cargos (lacking the secretion signal sequence) such as the interleukin 1/IL-1 to facilitate their translocation into the ERGIC (endoplasmic reticulum-Golgi intermediate compartment) and secretion; the translocation process is mediated by the cargo receptor TMED10 (By similarity).</text>
</comment>
<comment type="catalytic activity">
    <reaction evidence="3">
        <text>ATP + H2O = ADP + phosphate + H(+)</text>
        <dbReference type="Rhea" id="RHEA:13065"/>
        <dbReference type="ChEBI" id="CHEBI:15377"/>
        <dbReference type="ChEBI" id="CHEBI:15378"/>
        <dbReference type="ChEBI" id="CHEBI:30616"/>
        <dbReference type="ChEBI" id="CHEBI:43474"/>
        <dbReference type="ChEBI" id="CHEBI:456216"/>
    </reaction>
    <physiologicalReaction direction="left-to-right" evidence="3">
        <dbReference type="Rhea" id="RHEA:13066"/>
    </physiologicalReaction>
</comment>
<comment type="subunit">
    <text evidence="1 2">Homodimer; disulfide-linked. Component of an EIF2 complex at least composed of CELF1/CUGBP1, CALR, CALR3, EIF2S1, EIF2S2, HSP90B1 and HSPA5 (By similarity). Part of a large chaperone multiprotein complex comprising DNAJB11, HSP90B1, HSPA5, HYOU, PDIA2, PDIA4, PDIA6, PPIB, SDF2L1, UGGT1 and very small amounts of ERP29, but not, or at very low levels, CALR nor CANX. Interacts with AIMP1; regulates its retention in the endoplasmic reticulum. Hyperglycosylated form interacts with OS9; promoting its degradation by the endoplasmic reticulum associated degradation (ERAD) (By similarity). Interacts with CNPY3. This interaction is disrupted in the presence of ATP (By similarity). Interacts with TLR4 and TLR9, but not with TLR3 (By similarity). Interacts with MZB1 in a calcium-dependent manner (By similarity). Interacts with METTL23. Interacts with IL1B; the interaction facilitates cargo translocation into the ERGIC. Interacts with EIF2AK3 (By similarity).</text>
</comment>
<comment type="subcellular location">
    <subcellularLocation>
        <location evidence="7">Endoplasmic reticulum lumen</location>
    </subcellularLocation>
    <subcellularLocation>
        <location evidence="3">Sarcoplasmic reticulum lumen</location>
    </subcellularLocation>
    <subcellularLocation>
        <location evidence="2">Melanosome</location>
    </subcellularLocation>
</comment>
<comment type="alternative products">
    <event type="alternative splicing"/>
    <isoform>
        <id>Q66HD0-1</id>
        <name>1</name>
        <sequence type="displayed"/>
    </isoform>
    <isoform>
        <id>Q66HD0-2</id>
        <name>2</name>
        <sequence type="described" ref="VSP_035206"/>
    </isoform>
</comment>
<comment type="domain">
    <text evidence="2">The SRT pseudosubstrate motif associates with STT3A during translation in normal conditions, preventing glycosylation of facultative sites until HSP90B1 folding is completed.</text>
</comment>
<comment type="PTM">
    <text evidence="3">Phosphorylated by CK2.</text>
</comment>
<comment type="PTM">
    <text evidence="2">N-glycosylated cotranslationally at Asn-217 by STT3A-containing OST-A complex: this glycosylation is constitutive. In response to various stress, 5 additional facultative sites (Asn-62, Asn-107, Asn-445, Asn-481 and Asn-502) can be glycosylated post-translationally by STT3B-containing OST-B complex, leading to a hyperglycosylated form that is degraded by the ER-associated degradation (ERAD) pathway. In normal conditions, the OST-A complex together with CCDC134 prevent glycosylation at facultative sites during protein folding, thereby preventing hyperglycosylation. Mechanistically, nascent HSP90B1 is tethered during translation to a specialized CCDC134-containing translocon that forms a microenvironment for its folding, in which STT3A associates with the SRT pseudosubstrate motif, and prevents access to facultative glycosylation sites until folding is completed, rendering its facultative sites inaccessible to the OST-B complex.</text>
</comment>
<comment type="similarity">
    <text evidence="9">Belongs to the heat shock protein 90 family.</text>
</comment>
<accession>Q66HD0</accession>
<accession>A6IFJ6</accession>
<sequence>MRVLWVLGLCCVLLTFGFVRADDEVDVDGTVEEDLGKSREGSRTDDEVVQREEEAIQLDGLNASQIRELREKSEKFAFQAEVNRMMKLIINSLYKNKEIFLRELISNASDALDKIRLISLTDENALAGNEELTVKIKCDREKNLLHVTDTGVGMTREELVKNLGTIAKSGTSEFLNKMTEAQEDGQSTSELIGQFGVGFYSAFLVADKVIVTSKHNNDTQHIWESDSNEFSVIADPRGNTLGRGTTITLVLKEEASDYLELDTIKNLVRKYSQFINFPIYVWSSKTETVEEPLEEDETAQEEKEEADDEAAVEEEEEEKKPKTKKVEKTVWDWELMNDIKPIWQRPSKEVEEDEYKAFYKSFSKESDDPMAYIHFTAEGEVTFKSILFVPTSAPRGLFDEYGSKKSDYIKLYVRRVFITDDFHDMMPKYLNFVKGVVDSDDLPLNVSRETLQQHKLLKVIRKKLVRKTLDMIKKIADEKYNDTFWKEFGTNIKLGVIEDHSNRTRLAKLLRFQSSHHSTDITSLDQYVERMKEKQDKIYFMAGSSRKEAESSPFVERLLKKGYEVIYLTEPVDEYCIQALPEFDGKRFQNVAKEGVKFDESEKSKESREATEKEFEPLLNWMKDKALKDKIEKAVVSQRLTESPCALVASQYGWSGNMERIMKAQAYQTGKDISTNYYASQKKTFEINPRHPLIRDMLRRVKEDEDDKTVMDLAVVLFETATLRSGYLLPDTKAYGDRIERMLRLSLNIDPEAQVEEEPEEEPEDTTEDTTDDSEQDEEETDAGAEEEEEEQETEKEPTEKDEL</sequence>
<gene>
    <name evidence="1" type="primary">Hsp90b1</name>
    <name type="synonym">Grp94</name>
    <name evidence="2" type="synonym">Hspc4</name>
    <name evidence="10" type="synonym">Tra1</name>
</gene>
<evidence type="ECO:0000250" key="1">
    <source>
        <dbReference type="UniProtKB" id="P08113"/>
    </source>
</evidence>
<evidence type="ECO:0000250" key="2">
    <source>
        <dbReference type="UniProtKB" id="P14625"/>
    </source>
</evidence>
<evidence type="ECO:0000250" key="3">
    <source>
        <dbReference type="UniProtKB" id="P41148"/>
    </source>
</evidence>
<evidence type="ECO:0000255" key="4"/>
<evidence type="ECO:0000256" key="5">
    <source>
        <dbReference type="SAM" id="MobiDB-lite"/>
    </source>
</evidence>
<evidence type="ECO:0000269" key="6">
    <source>
    </source>
</evidence>
<evidence type="ECO:0000269" key="7">
    <source>
    </source>
</evidence>
<evidence type="ECO:0000303" key="8">
    <source>
    </source>
</evidence>
<evidence type="ECO:0000305" key="9"/>
<evidence type="ECO:0000312" key="10">
    <source>
        <dbReference type="EMBL" id="AAH81917.1"/>
    </source>
</evidence>
<evidence type="ECO:0007744" key="11">
    <source>
    </source>
</evidence>